<dbReference type="EMBL" id="BC111157">
    <property type="protein sequence ID" value="AAI11158.1"/>
    <property type="molecule type" value="mRNA"/>
</dbReference>
<dbReference type="RefSeq" id="NP_001033149.1">
    <property type="nucleotide sequence ID" value="NM_001038060.1"/>
</dbReference>
<dbReference type="FunCoup" id="Q2TA21">
    <property type="interactions" value="155"/>
</dbReference>
<dbReference type="STRING" id="9913.ENSBTAP00000027817"/>
<dbReference type="GlyCosmos" id="Q2TA21">
    <property type="glycosylation" value="1 site, No reported glycans"/>
</dbReference>
<dbReference type="GlyGen" id="Q2TA21">
    <property type="glycosylation" value="1 site"/>
</dbReference>
<dbReference type="PaxDb" id="9913-ENSBTAP00000027817"/>
<dbReference type="GeneID" id="508562"/>
<dbReference type="KEGG" id="bta:508562"/>
<dbReference type="CTD" id="145407"/>
<dbReference type="eggNOG" id="ENOG502QWJQ">
    <property type="taxonomic scope" value="Eukaryota"/>
</dbReference>
<dbReference type="InParanoid" id="Q2TA21"/>
<dbReference type="OrthoDB" id="9904542at2759"/>
<dbReference type="Proteomes" id="UP000009136">
    <property type="component" value="Unplaced"/>
</dbReference>
<dbReference type="GO" id="GO:0016020">
    <property type="term" value="C:membrane"/>
    <property type="evidence" value="ECO:0000250"/>
    <property type="project" value="UniProtKB"/>
</dbReference>
<dbReference type="GO" id="GO:1904841">
    <property type="term" value="F:TORC2 complex binding"/>
    <property type="evidence" value="ECO:0000250"/>
    <property type="project" value="UniProtKB"/>
</dbReference>
<dbReference type="GO" id="GO:0050727">
    <property type="term" value="P:regulation of inflammatory response"/>
    <property type="evidence" value="ECO:0000250"/>
    <property type="project" value="UniProtKB"/>
</dbReference>
<dbReference type="GO" id="GO:1903939">
    <property type="term" value="P:regulation of TORC2 signaling"/>
    <property type="evidence" value="ECO:0000250"/>
    <property type="project" value="UniProtKB"/>
</dbReference>
<dbReference type="InterPro" id="IPR031524">
    <property type="entry name" value="ARMH4"/>
</dbReference>
<dbReference type="PANTHER" id="PTHR21585:SF0">
    <property type="entry name" value="ARMADILLO-LIKE HELICAL DOMAIN-CONTAINING PROTEIN 4"/>
    <property type="match status" value="1"/>
</dbReference>
<dbReference type="PANTHER" id="PTHR21585">
    <property type="entry name" value="FULL-LENGTH CDNA CLONE CS0DC025YL05 OF NEUROBLASTOMA"/>
    <property type="match status" value="1"/>
</dbReference>
<dbReference type="Pfam" id="PF15767">
    <property type="entry name" value="ARMH4"/>
    <property type="match status" value="1"/>
</dbReference>
<name>ARMD4_BOVIN</name>
<accession>Q2TA21</accession>
<proteinExistence type="evidence at transcript level"/>
<comment type="function">
    <text evidence="1 2">May modulate immune response and may play a role in inflammation. Down-modulates STAT3 signaling throught direct interaction with IL6ST, resulting in the inhibition of phosphorylation of STAT3 at Tyr-705 (By similarity). May negatively regulates AKT signaling by modulating the activity of mTORC2 complex through RICTOR interaction (By similarity).</text>
</comment>
<comment type="subunit">
    <text evidence="1 2">Interacts with IL6ST; this interaction prevents IL6ST protein homodimerization and bridges ARMH4 with IL6R and STAT3 and therefore inhibits phosphorylation of STAT3 at 'Tyr-705' (By similarity). Interacts (via cytoplasmic tail) with RICTOR; this interaction bridges ARMH4 to the mTORC2 complex and inhibits the mTORC2 kinase activity (By similarity).</text>
</comment>
<comment type="subcellular location">
    <subcellularLocation>
        <location evidence="1">Membrane</location>
        <topology evidence="1">Single-pass type I membrane protein</topology>
    </subcellularLocation>
</comment>
<protein>
    <recommendedName>
        <fullName evidence="1">Armadillo-like helical domain-containing protein 4</fullName>
    </recommendedName>
</protein>
<sequence>MSRPIVLHICLAFCSLLLLNFAAQCLAFPNLERREIVLLHAEKGQSERLNTDDLENDSVTSNTPVSGDPMIVLAGPSTMSLNKVFPSNKETSPVGAGLMQADGSNIYTATEPEVPAGEEVFGSSQPERMSPESRPSKATLTNPVMPTASLNIDEREEPSRGTIIQPTVEGTTEATQGFLSYVDDQLFATESPEGLSLGHSPLSLVNTKEMLTTSPRTEKFEANPEHKTTSFPGSKLTAGTEPSQMTADNTQATAATKHWLPTSESILSVEPETDSLLGAPEVTTSVSTAVAAAPVISDEWDDTKLESVSQIKTPKLGDNTETQVRMEISQTTQAPDIGMEVMEEGKALTEAADVSLKLPEMETHMETTLPMAHGGERASDQSSVTPTSPMGDTKVSVMNLVQDTADFVESTKENGAMFLETTVSISEYESEVHQPLGNRFKDIITQEMTTAVQAAEATVSLVTQEQQVATLEVTRGEDETKGGRELPSATVDAPRATQLSRRWEPLATVVSTTPIPVSFKVTPAVEDVMDTVTGPNEELFTPILGSPVTPPGITEEAPSTSPALADPEASSERRTAAPSFSYVNTAASYGLDQLESEEGEDDEDEEDEEEEDEEEEDEEEDEEDKDADSLDEALGDTELPGFTLPGITSQEPGLEQENVVSLEGVTFQVPDAIQWEQQNQGLVRSWMEKLKDKAGYMSGMLVPVGVGIAGALFILGALYSIKVMNRRRRNGFKRHKRKQREFNSMQDRVMLLADSSEDEF</sequence>
<organism>
    <name type="scientific">Bos taurus</name>
    <name type="common">Bovine</name>
    <dbReference type="NCBI Taxonomy" id="9913"/>
    <lineage>
        <taxon>Eukaryota</taxon>
        <taxon>Metazoa</taxon>
        <taxon>Chordata</taxon>
        <taxon>Craniata</taxon>
        <taxon>Vertebrata</taxon>
        <taxon>Euteleostomi</taxon>
        <taxon>Mammalia</taxon>
        <taxon>Eutheria</taxon>
        <taxon>Laurasiatheria</taxon>
        <taxon>Artiodactyla</taxon>
        <taxon>Ruminantia</taxon>
        <taxon>Pecora</taxon>
        <taxon>Bovidae</taxon>
        <taxon>Bovinae</taxon>
        <taxon>Bos</taxon>
    </lineage>
</organism>
<feature type="signal peptide" evidence="3">
    <location>
        <begin position="1"/>
        <end position="27"/>
    </location>
</feature>
<feature type="chain" id="PRO_0000252151" description="Armadillo-like helical domain-containing protein 4">
    <location>
        <begin position="28"/>
        <end position="760"/>
    </location>
</feature>
<feature type="topological domain" description="Extracellular" evidence="3">
    <location>
        <begin position="28"/>
        <end position="700"/>
    </location>
</feature>
<feature type="transmembrane region" description="Helical" evidence="3">
    <location>
        <begin position="701"/>
        <end position="721"/>
    </location>
</feature>
<feature type="topological domain" description="Cytoplasmic" evidence="3">
    <location>
        <begin position="722"/>
        <end position="760"/>
    </location>
</feature>
<feature type="region of interest" description="Disordered" evidence="4">
    <location>
        <begin position="49"/>
        <end position="69"/>
    </location>
</feature>
<feature type="region of interest" description="Disordered" evidence="4">
    <location>
        <begin position="117"/>
        <end position="143"/>
    </location>
</feature>
<feature type="region of interest" description="Disordered" evidence="4">
    <location>
        <begin position="216"/>
        <end position="243"/>
    </location>
</feature>
<feature type="region of interest" description="Disordered" evidence="4">
    <location>
        <begin position="373"/>
        <end position="392"/>
    </location>
</feature>
<feature type="region of interest" description="Disordered" evidence="4">
    <location>
        <begin position="474"/>
        <end position="495"/>
    </location>
</feature>
<feature type="region of interest" description="Disordered" evidence="4">
    <location>
        <begin position="536"/>
        <end position="652"/>
    </location>
</feature>
<feature type="compositionally biased region" description="Basic and acidic residues" evidence="4">
    <location>
        <begin position="216"/>
        <end position="228"/>
    </location>
</feature>
<feature type="compositionally biased region" description="Polar residues" evidence="4">
    <location>
        <begin position="380"/>
        <end position="390"/>
    </location>
</feature>
<feature type="compositionally biased region" description="Basic and acidic residues" evidence="4">
    <location>
        <begin position="474"/>
        <end position="484"/>
    </location>
</feature>
<feature type="compositionally biased region" description="Acidic residues" evidence="4">
    <location>
        <begin position="594"/>
        <end position="635"/>
    </location>
</feature>
<feature type="modified residue" description="Phosphoserine" evidence="1">
    <location>
        <position position="755"/>
    </location>
</feature>
<feature type="modified residue" description="Phosphoserine" evidence="1">
    <location>
        <position position="756"/>
    </location>
</feature>
<feature type="glycosylation site" description="N-linked (GlcNAc...) asparagine" evidence="3">
    <location>
        <position position="56"/>
    </location>
</feature>
<evidence type="ECO:0000250" key="1">
    <source>
        <dbReference type="UniProtKB" id="Q86TY3"/>
    </source>
</evidence>
<evidence type="ECO:0000250" key="2">
    <source>
        <dbReference type="UniProtKB" id="Q8BT18"/>
    </source>
</evidence>
<evidence type="ECO:0000255" key="3"/>
<evidence type="ECO:0000256" key="4">
    <source>
        <dbReference type="SAM" id="MobiDB-lite"/>
    </source>
</evidence>
<gene>
    <name evidence="1" type="primary">ARMH4</name>
</gene>
<keyword id="KW-0325">Glycoprotein</keyword>
<keyword id="KW-0472">Membrane</keyword>
<keyword id="KW-0597">Phosphoprotein</keyword>
<keyword id="KW-1185">Reference proteome</keyword>
<keyword id="KW-0732">Signal</keyword>
<keyword id="KW-0812">Transmembrane</keyword>
<keyword id="KW-1133">Transmembrane helix</keyword>
<reference key="1">
    <citation type="submission" date="2005-12" db="EMBL/GenBank/DDBJ databases">
        <authorList>
            <consortium name="NIH - Mammalian Gene Collection (MGC) project"/>
        </authorList>
    </citation>
    <scope>NUCLEOTIDE SEQUENCE [LARGE SCALE MRNA]</scope>
    <source>
        <strain>Crossbred X Angus</strain>
        <tissue>Liver</tissue>
    </source>
</reference>